<reference key="1">
    <citation type="journal article" date="2002" name="Proc. Natl. Acad. Sci. U.S.A.">
        <title>The genome sequence of the facultative intracellular pathogen Brucella melitensis.</title>
        <authorList>
            <person name="DelVecchio V.G."/>
            <person name="Kapatral V."/>
            <person name="Redkar R.J."/>
            <person name="Patra G."/>
            <person name="Mujer C."/>
            <person name="Los T."/>
            <person name="Ivanova N."/>
            <person name="Anderson I."/>
            <person name="Bhattacharyya A."/>
            <person name="Lykidis A."/>
            <person name="Reznik G."/>
            <person name="Jablonski L."/>
            <person name="Larsen N."/>
            <person name="D'Souza M."/>
            <person name="Bernal A."/>
            <person name="Mazur M."/>
            <person name="Goltsman E."/>
            <person name="Selkov E."/>
            <person name="Elzer P.H."/>
            <person name="Hagius S."/>
            <person name="O'Callaghan D."/>
            <person name="Letesson J.-J."/>
            <person name="Haselkorn R."/>
            <person name="Kyrpides N.C."/>
            <person name="Overbeek R."/>
        </authorList>
    </citation>
    <scope>NUCLEOTIDE SEQUENCE [LARGE SCALE GENOMIC DNA]</scope>
    <source>
        <strain>ATCC 23456 / CCUG 17765 / NCTC 10094 / 16M</strain>
    </source>
</reference>
<sequence length="543" mass="58303">MTATPARRTSLASPATKPVAGGLALAFLATLAGGALLALALEAGGGGFDAAANFDTYLWRVARFTIWQAVASSLLSVLFAIPIARALYAEARFPGRGLILRLFAQPLALPALVAVLGVTSIYGRNGLIAHISDMLGHPMQPDIYGIAGILIAHIFFNMPLAVRLLLAAYESIPDDHWKLAAQLGMGSRARFRLIDWPVIRRSLPGMIGLVFMLCVTSFTTVLTLGGGPRATTLEVAIYQSLHFDFDPARAVALTFTQLALTLLILLILRLTGRPSEEGFTQTATPRRYGSPRKTERLFNIIVIALGFLYVALPIAGVVVSGLTADLVRLLSERIVWHAIATSLALGFSAALLAVFLSLALVAAREATRNARIANIFDTGASLILVMPPIVIGAGWFILLRHFTDPFVMAPLMVVTVNAAMAMPFAVRLLRPAWDTAASRHNKLCSQLGIKGFNRLRLIDWPSIRRPCGMAFAFAMALSLGDLGTIALFGSDALVTLPYLLLQRMGSYRTFDAAGLALILGVLCLALMMIADRAAASRKEAFLQ</sequence>
<name>THIP_BRUME</name>
<dbReference type="EMBL" id="AE008917">
    <property type="protein sequence ID" value="AAL51465.1"/>
    <property type="status" value="ALT_INIT"/>
    <property type="molecule type" value="Genomic_DNA"/>
</dbReference>
<dbReference type="PIR" id="AF3287">
    <property type="entry name" value="AF3287"/>
</dbReference>
<dbReference type="RefSeq" id="WP_005970857.1">
    <property type="nucleotide sequence ID" value="NZ_GG703781.1"/>
</dbReference>
<dbReference type="SMR" id="Q8YJ03"/>
<dbReference type="GeneID" id="29593038"/>
<dbReference type="KEGG" id="bme:BMEI0284"/>
<dbReference type="KEGG" id="bmel:DK63_1149"/>
<dbReference type="PATRIC" id="fig|224914.52.peg.1213"/>
<dbReference type="eggNOG" id="COG1178">
    <property type="taxonomic scope" value="Bacteria"/>
</dbReference>
<dbReference type="PhylomeDB" id="Q8YJ03"/>
<dbReference type="Proteomes" id="UP000000419">
    <property type="component" value="Chromosome I"/>
</dbReference>
<dbReference type="GO" id="GO:0005886">
    <property type="term" value="C:plasma membrane"/>
    <property type="evidence" value="ECO:0007669"/>
    <property type="project" value="UniProtKB-SubCell"/>
</dbReference>
<dbReference type="GO" id="GO:0022857">
    <property type="term" value="F:transmembrane transporter activity"/>
    <property type="evidence" value="ECO:0007669"/>
    <property type="project" value="InterPro"/>
</dbReference>
<dbReference type="GO" id="GO:0015888">
    <property type="term" value="P:thiamine transport"/>
    <property type="evidence" value="ECO:0007669"/>
    <property type="project" value="InterPro"/>
</dbReference>
<dbReference type="CDD" id="cd06261">
    <property type="entry name" value="TM_PBP2"/>
    <property type="match status" value="2"/>
</dbReference>
<dbReference type="Gene3D" id="1.10.3720.10">
    <property type="entry name" value="MetI-like"/>
    <property type="match status" value="2"/>
</dbReference>
<dbReference type="InterPro" id="IPR000515">
    <property type="entry name" value="MetI-like"/>
</dbReference>
<dbReference type="InterPro" id="IPR035906">
    <property type="entry name" value="MetI-like_sf"/>
</dbReference>
<dbReference type="InterPro" id="IPR005947">
    <property type="entry name" value="ThiP_ABC_transpt"/>
</dbReference>
<dbReference type="NCBIfam" id="NF006956">
    <property type="entry name" value="PRK09433.2-5"/>
    <property type="match status" value="1"/>
</dbReference>
<dbReference type="NCBIfam" id="TIGR01253">
    <property type="entry name" value="thiP"/>
    <property type="match status" value="1"/>
</dbReference>
<dbReference type="PANTHER" id="PTHR30183">
    <property type="entry name" value="MOLYBDENUM TRANSPORT SYSTEM PERMEASE PROTEIN MODB"/>
    <property type="match status" value="1"/>
</dbReference>
<dbReference type="PANTHER" id="PTHR30183:SF9">
    <property type="entry name" value="THIAMINE TRANSPORT SYSTEM PERMEASE PROTEIN THIP"/>
    <property type="match status" value="1"/>
</dbReference>
<dbReference type="Pfam" id="PF00528">
    <property type="entry name" value="BPD_transp_1"/>
    <property type="match status" value="1"/>
</dbReference>
<dbReference type="SUPFAM" id="SSF161098">
    <property type="entry name" value="MetI-like"/>
    <property type="match status" value="2"/>
</dbReference>
<dbReference type="PROSITE" id="PS50928">
    <property type="entry name" value="ABC_TM1"/>
    <property type="match status" value="2"/>
</dbReference>
<protein>
    <recommendedName>
        <fullName>Thiamine transport system permease protein ThiP</fullName>
    </recommendedName>
</protein>
<evidence type="ECO:0000250" key="1">
    <source>
        <dbReference type="UniProtKB" id="P31549"/>
    </source>
</evidence>
<evidence type="ECO:0000250" key="2">
    <source>
        <dbReference type="UniProtKB" id="Q8ZRV1"/>
    </source>
</evidence>
<evidence type="ECO:0000255" key="3"/>
<evidence type="ECO:0000255" key="4">
    <source>
        <dbReference type="PROSITE-ProRule" id="PRU00441"/>
    </source>
</evidence>
<evidence type="ECO:0000305" key="5"/>
<proteinExistence type="inferred from homology"/>
<gene>
    <name type="primary">thiP</name>
    <name type="ordered locus">BMEI0284</name>
</gene>
<organism>
    <name type="scientific">Brucella melitensis biotype 1 (strain ATCC 23456 / CCUG 17765 / NCTC 10094 / 16M)</name>
    <dbReference type="NCBI Taxonomy" id="224914"/>
    <lineage>
        <taxon>Bacteria</taxon>
        <taxon>Pseudomonadati</taxon>
        <taxon>Pseudomonadota</taxon>
        <taxon>Alphaproteobacteria</taxon>
        <taxon>Hyphomicrobiales</taxon>
        <taxon>Brucellaceae</taxon>
        <taxon>Brucella/Ochrobactrum group</taxon>
        <taxon>Brucella</taxon>
    </lineage>
</organism>
<comment type="function">
    <text evidence="2">Part of the ABC transporter complex ThiBPQ involved in thiamine import. Probably responsible for the translocation of the substrate across the membrane.</text>
</comment>
<comment type="subunit">
    <text evidence="2">The complex is composed of two ATP-binding proteins (ThiQ), two transmembrane proteins (ThiP) and a solute-binding protein (ThiB).</text>
</comment>
<comment type="subcellular location">
    <subcellularLocation>
        <location evidence="1">Cell inner membrane</location>
        <topology evidence="3">Multi-pass membrane protein</topology>
    </subcellularLocation>
</comment>
<comment type="similarity">
    <text evidence="5">Belongs to the binding-protein-dependent transport system permease family. CysTW subfamily.</text>
</comment>
<comment type="sequence caution" evidence="5">
    <conflict type="erroneous initiation">
        <sequence resource="EMBL-CDS" id="AAL51465"/>
    </conflict>
</comment>
<keyword id="KW-0997">Cell inner membrane</keyword>
<keyword id="KW-1003">Cell membrane</keyword>
<keyword id="KW-0472">Membrane</keyword>
<keyword id="KW-0677">Repeat</keyword>
<keyword id="KW-0812">Transmembrane</keyword>
<keyword id="KW-1133">Transmembrane helix</keyword>
<keyword id="KW-0813">Transport</keyword>
<feature type="chain" id="PRO_0000282909" description="Thiamine transport system permease protein ThiP">
    <location>
        <begin position="1"/>
        <end position="543"/>
    </location>
</feature>
<feature type="transmembrane region" description="Helical" evidence="4">
    <location>
        <begin position="19"/>
        <end position="39"/>
    </location>
</feature>
<feature type="transmembrane region" description="Helical" evidence="4">
    <location>
        <begin position="64"/>
        <end position="84"/>
    </location>
</feature>
<feature type="transmembrane region" description="Helical" evidence="4">
    <location>
        <begin position="102"/>
        <end position="122"/>
    </location>
</feature>
<feature type="transmembrane region" description="Helical" evidence="4">
    <location>
        <begin position="142"/>
        <end position="162"/>
    </location>
</feature>
<feature type="transmembrane region" description="Helical" evidence="4">
    <location>
        <begin position="205"/>
        <end position="225"/>
    </location>
</feature>
<feature type="transmembrane region" description="Helical" evidence="4">
    <location>
        <begin position="250"/>
        <end position="270"/>
    </location>
</feature>
<feature type="transmembrane region" description="Helical" evidence="4">
    <location>
        <begin position="300"/>
        <end position="320"/>
    </location>
</feature>
<feature type="transmembrane region" description="Helical" evidence="4">
    <location>
        <begin position="343"/>
        <end position="363"/>
    </location>
</feature>
<feature type="transmembrane region" description="Helical" evidence="4">
    <location>
        <begin position="379"/>
        <end position="399"/>
    </location>
</feature>
<feature type="transmembrane region" description="Helical" evidence="4">
    <location>
        <begin position="406"/>
        <end position="426"/>
    </location>
</feature>
<feature type="transmembrane region" description="Helical" evidence="4">
    <location>
        <begin position="468"/>
        <end position="488"/>
    </location>
</feature>
<feature type="transmembrane region" description="Helical" evidence="4">
    <location>
        <begin position="510"/>
        <end position="530"/>
    </location>
</feature>
<feature type="domain" description="ABC transmembrane type-1 1" evidence="4">
    <location>
        <begin position="62"/>
        <end position="266"/>
    </location>
</feature>
<feature type="domain" description="ABC transmembrane type-1 2" evidence="4">
    <location>
        <begin position="339"/>
        <end position="530"/>
    </location>
</feature>
<accession>Q8YJ03</accession>